<sequence length="372" mass="39381">MKYLTLLTVLSTALATPLQHQHHHHHEHARRAEVTKVVYVNGNGDEVQSQVTENASSGASSGETAETIQTRSSSDVSSSSDSNPVASIASSVASSASSILSNIEGDLSAFSSPSKKFEDGVYDCDSVPVGQGVIGVDWISGLNGGWTTIMNENGDTSLNCKDGYYCSYACQAGMSKTQWPSEQPSNGMSIGGLYCKNGKLYRSNTDNDYLCEWGSKDVNFVSEISEDVAICRTDYPGSENMNIPTLLSAGGKAPCSVVDGDTYFKWQGGKTSTQYYVNNAGVSVEDGCIWGTEGSGVGNWAPVVLGSGTTGGKTYLSLIPNPNNKDKPNYNIKIVGDDVNGDCKYENGQYNGSGSDGCTVTVNSGSAKFVFY</sequence>
<name>UTH1_CANAL</name>
<evidence type="ECO:0000255" key="1"/>
<evidence type="ECO:0000256" key="2">
    <source>
        <dbReference type="SAM" id="MobiDB-lite"/>
    </source>
</evidence>
<evidence type="ECO:0000269" key="3">
    <source>
    </source>
</evidence>
<evidence type="ECO:0000269" key="4">
    <source>
    </source>
</evidence>
<evidence type="ECO:0000269" key="5">
    <source>
    </source>
</evidence>
<evidence type="ECO:0000269" key="6">
    <source>
    </source>
</evidence>
<evidence type="ECO:0000269" key="7">
    <source>
    </source>
</evidence>
<evidence type="ECO:0000269" key="8">
    <source>
    </source>
</evidence>
<evidence type="ECO:0000269" key="9">
    <source>
    </source>
</evidence>
<evidence type="ECO:0000305" key="10"/>
<feature type="signal peptide" evidence="1">
    <location>
        <begin position="1"/>
        <end position="15"/>
    </location>
</feature>
<feature type="chain" id="PRO_0000428631" description="Secreted beta-glucosidase SIM1">
    <location>
        <begin position="16"/>
        <end position="372"/>
    </location>
</feature>
<feature type="region of interest" description="Disordered" evidence="2">
    <location>
        <begin position="51"/>
        <end position="85"/>
    </location>
</feature>
<feature type="compositionally biased region" description="Low complexity" evidence="2">
    <location>
        <begin position="52"/>
        <end position="85"/>
    </location>
</feature>
<feature type="glycosylation site" description="N-linked (GlcNAc...) asparagine" evidence="1">
    <location>
        <position position="54"/>
    </location>
</feature>
<feature type="glycosylation site" description="N-linked (GlcNAc...) asparagine" evidence="1">
    <location>
        <position position="351"/>
    </location>
</feature>
<accession>Q5AKU5</accession>
<accession>A0A1D8PFU0</accession>
<keyword id="KW-0119">Carbohydrate metabolism</keyword>
<keyword id="KW-0134">Cell wall</keyword>
<keyword id="KW-0961">Cell wall biogenesis/degradation</keyword>
<keyword id="KW-0325">Glycoprotein</keyword>
<keyword id="KW-0326">Glycosidase</keyword>
<keyword id="KW-0378">Hydrolase</keyword>
<keyword id="KW-0624">Polysaccharide degradation</keyword>
<keyword id="KW-1185">Reference proteome</keyword>
<keyword id="KW-0964">Secreted</keyword>
<keyword id="KW-0732">Signal</keyword>
<protein>
    <recommendedName>
        <fullName>Secreted beta-glucosidase SIM1</fullName>
        <ecNumber>3.2.1.-</ecNumber>
    </recommendedName>
</protein>
<dbReference type="EC" id="3.2.1.-"/>
<dbReference type="EMBL" id="CP017623">
    <property type="protein sequence ID" value="AOW26995.1"/>
    <property type="molecule type" value="Genomic_DNA"/>
</dbReference>
<dbReference type="RefSeq" id="XP_722234.1">
    <property type="nucleotide sequence ID" value="XM_717141.1"/>
</dbReference>
<dbReference type="STRING" id="237561.Q5AKU5"/>
<dbReference type="GlyCosmos" id="Q5AKU5">
    <property type="glycosylation" value="2 sites, No reported glycans"/>
</dbReference>
<dbReference type="EnsemblFungi" id="C1_13940W_A-T">
    <property type="protein sequence ID" value="C1_13940W_A-T-p1"/>
    <property type="gene ID" value="C1_13940W_A"/>
</dbReference>
<dbReference type="GeneID" id="3636185"/>
<dbReference type="KEGG" id="cal:CAALFM_C113940WA"/>
<dbReference type="CGD" id="CAL0000182747">
    <property type="gene designation" value="SIM1"/>
</dbReference>
<dbReference type="VEuPathDB" id="FungiDB:C1_13940W_A"/>
<dbReference type="eggNOG" id="ENOG502QREM">
    <property type="taxonomic scope" value="Eukaryota"/>
</dbReference>
<dbReference type="HOGENOM" id="CLU_033459_2_0_1"/>
<dbReference type="InParanoid" id="Q5AKU5"/>
<dbReference type="OMA" id="CIWGTEG"/>
<dbReference type="OrthoDB" id="5339822at2759"/>
<dbReference type="PRO" id="PR:Q5AKU5"/>
<dbReference type="Proteomes" id="UP000000559">
    <property type="component" value="Chromosome 1"/>
</dbReference>
<dbReference type="GO" id="GO:0009986">
    <property type="term" value="C:cell surface"/>
    <property type="evidence" value="ECO:0000314"/>
    <property type="project" value="CGD"/>
</dbReference>
<dbReference type="GO" id="GO:0005576">
    <property type="term" value="C:extracellular region"/>
    <property type="evidence" value="ECO:0000314"/>
    <property type="project" value="CGD"/>
</dbReference>
<dbReference type="GO" id="GO:0009277">
    <property type="term" value="C:fungal-type cell wall"/>
    <property type="evidence" value="ECO:0000314"/>
    <property type="project" value="CGD"/>
</dbReference>
<dbReference type="GO" id="GO:0005743">
    <property type="term" value="C:mitochondrial inner membrane"/>
    <property type="evidence" value="ECO:0007669"/>
    <property type="project" value="EnsemblFungi"/>
</dbReference>
<dbReference type="GO" id="GO:0016798">
    <property type="term" value="F:hydrolase activity, acting on glycosyl bonds"/>
    <property type="evidence" value="ECO:0007669"/>
    <property type="project" value="UniProtKB-KW"/>
</dbReference>
<dbReference type="GO" id="GO:0000422">
    <property type="term" value="P:autophagy of mitochondrion"/>
    <property type="evidence" value="ECO:0007669"/>
    <property type="project" value="EnsemblFungi"/>
</dbReference>
<dbReference type="GO" id="GO:0009272">
    <property type="term" value="P:fungal-type cell wall biogenesis"/>
    <property type="evidence" value="ECO:0007669"/>
    <property type="project" value="EnsemblFungi"/>
</dbReference>
<dbReference type="GO" id="GO:0031505">
    <property type="term" value="P:fungal-type cell wall organization"/>
    <property type="evidence" value="ECO:0000318"/>
    <property type="project" value="GO_Central"/>
</dbReference>
<dbReference type="GO" id="GO:0000272">
    <property type="term" value="P:polysaccharide catabolic process"/>
    <property type="evidence" value="ECO:0007669"/>
    <property type="project" value="UniProtKB-KW"/>
</dbReference>
<dbReference type="GO" id="GO:0006275">
    <property type="term" value="P:regulation of DNA replication"/>
    <property type="evidence" value="ECO:0000303"/>
    <property type="project" value="CGD"/>
</dbReference>
<dbReference type="InterPro" id="IPR051526">
    <property type="entry name" value="Beta-Glucosidase_SUN"/>
</dbReference>
<dbReference type="InterPro" id="IPR005556">
    <property type="entry name" value="SUN"/>
</dbReference>
<dbReference type="PANTHER" id="PTHR31316">
    <property type="entry name" value="BETA-GLUCOSIDASE-LIKE PROTEIN NCA3, MITOCHONDRIAL-RELATED"/>
    <property type="match status" value="1"/>
</dbReference>
<dbReference type="PANTHER" id="PTHR31316:SF0">
    <property type="entry name" value="SECRETED BETA-GLUCOSIDASE SIM1-RELATED"/>
    <property type="match status" value="1"/>
</dbReference>
<dbReference type="Pfam" id="PF03856">
    <property type="entry name" value="SUN"/>
    <property type="match status" value="1"/>
</dbReference>
<organism>
    <name type="scientific">Candida albicans (strain SC5314 / ATCC MYA-2876)</name>
    <name type="common">Yeast</name>
    <dbReference type="NCBI Taxonomy" id="237561"/>
    <lineage>
        <taxon>Eukaryota</taxon>
        <taxon>Fungi</taxon>
        <taxon>Dikarya</taxon>
        <taxon>Ascomycota</taxon>
        <taxon>Saccharomycotina</taxon>
        <taxon>Pichiomycetes</taxon>
        <taxon>Debaryomycetaceae</taxon>
        <taxon>Candida/Lodderomyces clade</taxon>
        <taxon>Candida</taxon>
    </lineage>
</organism>
<reference key="1">
    <citation type="journal article" date="2004" name="Proc. Natl. Acad. Sci. U.S.A.">
        <title>The diploid genome sequence of Candida albicans.</title>
        <authorList>
            <person name="Jones T."/>
            <person name="Federspiel N.A."/>
            <person name="Chibana H."/>
            <person name="Dungan J."/>
            <person name="Kalman S."/>
            <person name="Magee B.B."/>
            <person name="Newport G."/>
            <person name="Thorstenson Y.R."/>
            <person name="Agabian N."/>
            <person name="Magee P.T."/>
            <person name="Davis R.W."/>
            <person name="Scherer S."/>
        </authorList>
    </citation>
    <scope>NUCLEOTIDE SEQUENCE [LARGE SCALE GENOMIC DNA]</scope>
    <source>
        <strain>SC5314 / ATCC MYA-2876</strain>
    </source>
</reference>
<reference key="2">
    <citation type="journal article" date="2007" name="Genome Biol.">
        <title>Assembly of the Candida albicans genome into sixteen supercontigs aligned on the eight chromosomes.</title>
        <authorList>
            <person name="van het Hoog M."/>
            <person name="Rast T.J."/>
            <person name="Martchenko M."/>
            <person name="Grindle S."/>
            <person name="Dignard D."/>
            <person name="Hogues H."/>
            <person name="Cuomo C."/>
            <person name="Berriman M."/>
            <person name="Scherer S."/>
            <person name="Magee B.B."/>
            <person name="Whiteway M."/>
            <person name="Chibana H."/>
            <person name="Nantel A."/>
            <person name="Magee P.T."/>
        </authorList>
    </citation>
    <scope>GENOME REANNOTATION</scope>
    <source>
        <strain>SC5314 / ATCC MYA-2876</strain>
    </source>
</reference>
<reference key="3">
    <citation type="journal article" date="2013" name="Genome Biol.">
        <title>Assembly of a phased diploid Candida albicans genome facilitates allele-specific measurements and provides a simple model for repeat and indel structure.</title>
        <authorList>
            <person name="Muzzey D."/>
            <person name="Schwartz K."/>
            <person name="Weissman J.S."/>
            <person name="Sherlock G."/>
        </authorList>
    </citation>
    <scope>NUCLEOTIDE SEQUENCE [LARGE SCALE GENOMIC DNA]</scope>
    <scope>GENOME REANNOTATION</scope>
    <source>
        <strain>SC5314 / ATCC MYA-2876</strain>
    </source>
</reference>
<reference key="4">
    <citation type="journal article" date="2004" name="Eukaryot. Cell">
        <title>RBR1, a novel pH-regulated cell wall gene of Candida albicans, is repressed by RIM101 and activated by NRG1.</title>
        <authorList>
            <person name="Lotz H."/>
            <person name="Sohn K."/>
            <person name="Brunner H."/>
            <person name="Muhlschlegel F.A."/>
            <person name="Rupp S."/>
        </authorList>
    </citation>
    <scope>INDUCTION</scope>
</reference>
<reference key="5">
    <citation type="journal article" date="2007" name="Eukaryot. Cell">
        <title>Candida albicans Sun41p, a putative glycosidase, is involved in morphogenesis, cell wall biogenesis, and biofilm formation.</title>
        <authorList>
            <person name="Hiller E."/>
            <person name="Heine S."/>
            <person name="Brunner H."/>
            <person name="Rupp S."/>
        </authorList>
    </citation>
    <scope>IDENTIFICATION BY MASS SPECTROMETRY</scope>
    <scope>SUBCELLULAR LOCATION</scope>
</reference>
<reference key="6">
    <citation type="journal article" date="2007" name="Mol. Cell. Proteomics">
        <title>Integrated proteomics and genomics strategies bring new insight into Candida albicans response upon macrophage interaction.</title>
        <authorList>
            <person name="Fernandez-Arenas E."/>
            <person name="Cabezon V."/>
            <person name="Bermejo C."/>
            <person name="Arroyo J."/>
            <person name="Nombela C."/>
            <person name="Diez-Orejas R."/>
            <person name="Gil C."/>
        </authorList>
    </citation>
    <scope>INDUCTION</scope>
</reference>
<reference key="7">
    <citation type="journal article" date="2007" name="Mol. Microbiol.">
        <title>The SUN41 and SUN42 genes are essential for cell separation in Candida albicans.</title>
        <authorList>
            <person name="Firon A."/>
            <person name="Aubert S."/>
            <person name="Iraqui I."/>
            <person name="Guadagnini S."/>
            <person name="Goyard S."/>
            <person name="Prevost M.C."/>
            <person name="Janbon G."/>
            <person name="d'Enfert C."/>
        </authorList>
    </citation>
    <scope>FUNCTION</scope>
</reference>
<reference key="8">
    <citation type="journal article" date="2008" name="Microbiology">
        <title>Hypoxic conditions and iron restriction affect the cell-wall proteome of Candida albicans grown under vagina-simulative conditions.</title>
        <authorList>
            <person name="Sosinska G.J."/>
            <person name="de Groot P.W."/>
            <person name="Teixeira de Mattos M.J."/>
            <person name="Dekker H.L."/>
            <person name="de Koster C.G."/>
            <person name="Hellingwerf K.J."/>
            <person name="Klis F.M."/>
        </authorList>
    </citation>
    <scope>IDENTIFICATION BY MASS SPECTROMETRY</scope>
    <scope>SUBCELLULAR LOCATION</scope>
</reference>
<reference key="9">
    <citation type="journal article" date="2011" name="Eukaryot. Cell">
        <title>Effects of fluconazole on the secretome, the wall proteome, and wall integrity of the clinical fungus Candida albicans.</title>
        <authorList>
            <person name="Sorgo A.G."/>
            <person name="Heilmann C.J."/>
            <person name="Dekker H.L."/>
            <person name="Bekker M."/>
            <person name="Brul S."/>
            <person name="de Koster C.G."/>
            <person name="de Koning L.J."/>
            <person name="Klis F.M."/>
        </authorList>
    </citation>
    <scope>IDENTIFICATION BY MASS SPECTROMETRY</scope>
    <scope>SUBCELLULAR LOCATION</scope>
</reference>
<reference key="10">
    <citation type="journal article" date="2012" name="Cell">
        <title>A recently evolved transcriptional network controls biofilm development in Candida albicans.</title>
        <authorList>
            <person name="Nobile C.J."/>
            <person name="Fox E.P."/>
            <person name="Nett J.E."/>
            <person name="Sorrells T.R."/>
            <person name="Mitrovich Q.M."/>
            <person name="Hernday A.D."/>
            <person name="Tuch B.B."/>
            <person name="Andes D.R."/>
            <person name="Johnson A.D."/>
        </authorList>
    </citation>
    <scope>INDUCTION</scope>
</reference>
<proteinExistence type="evidence at protein level"/>
<gene>
    <name type="primary">SIM1</name>
    <name type="synonym">SUN42</name>
    <name type="synonym">UTH1</name>
    <name type="ordered locus">CAALFM_C113940WA</name>
    <name type="ORF">CaO19.12499</name>
    <name type="ORF">CaO19.5032</name>
</gene>
<comment type="function">
    <text evidence="6">Cell surface beta-glucosidase involved in cell wall maintenance and cytokinesis. Plays a role redundant to SUN41.</text>
</comment>
<comment type="subcellular location">
    <subcellularLocation>
        <location evidence="5 7 8">Secreted</location>
        <location evidence="5 7 8">Cell wall</location>
    </subcellularLocation>
</comment>
<comment type="induction">
    <text evidence="3 4 9">Expression is up-regulated during biofilm formation and down-regulated by RIM101, CYR1, RAS1, as well as by host macrophages.</text>
</comment>
<comment type="similarity">
    <text evidence="10">Belongs to the SUN family.</text>
</comment>